<proteinExistence type="inferred from homology"/>
<reference key="1">
    <citation type="journal article" date="2009" name="J. Bacteriol.">
        <title>Complete genome sequence of Macrococcus caseolyticus strain JCSCS5402, reflecting the ancestral genome of the human-pathogenic staphylococci.</title>
        <authorList>
            <person name="Baba T."/>
            <person name="Kuwahara-Arai K."/>
            <person name="Uchiyama I."/>
            <person name="Takeuchi F."/>
            <person name="Ito T."/>
            <person name="Hiramatsu K."/>
        </authorList>
    </citation>
    <scope>NUCLEOTIDE SEQUENCE [LARGE SCALE GENOMIC DNA]</scope>
    <source>
        <strain>JCSC5402</strain>
    </source>
</reference>
<accession>B9EB67</accession>
<sequence>MSTLLRGGKVLVNDELVSKDIRIEDGKIVEMGEKLNVYNSEIIELDGKFVSQGFVDVHVHLREPGGEHKETIESGTRAAARGGFTTVCPMPNTRPVPDSVEHIEALNQSIKQHAKVRVLPYASITERQLGKDLVDFKALKEHGAFAFTDDGVGVQTASIMYEAMQQAAQLNMAIVAHCEDNSLIYGGAMHEGKVSKALNIPGIPSICEAVQIARDVLLAEAADCHYHVCHVSSKESVRVIRDAKRAGIKVTAEVTPHHLLLNETAITEDDAILKMNPPLRSEEDHQALIEALLDGTIDFIATDHAPHAADEKNQPMTKAPFGIVGSETAFPLLYTRFVKNGDWTLGQLIDYLALKPGQVFGLPYGKSLEVGSIADITVIDLDEKYEIKSEDFLSKSSNTPFIGEHVYGNVKLTLVEGQIAYQEGQHA</sequence>
<protein>
    <recommendedName>
        <fullName evidence="1">Dihydroorotase</fullName>
        <shortName evidence="1">DHOase</shortName>
        <ecNumber evidence="1">3.5.2.3</ecNumber>
    </recommendedName>
</protein>
<dbReference type="EC" id="3.5.2.3" evidence="1"/>
<dbReference type="EMBL" id="AP009484">
    <property type="protein sequence ID" value="BAH17478.1"/>
    <property type="molecule type" value="Genomic_DNA"/>
</dbReference>
<dbReference type="RefSeq" id="WP_012656678.1">
    <property type="nucleotide sequence ID" value="NC_011999.1"/>
</dbReference>
<dbReference type="SMR" id="B9EB67"/>
<dbReference type="STRING" id="458233.MCCL_0771"/>
<dbReference type="KEGG" id="mcl:MCCL_0771"/>
<dbReference type="eggNOG" id="COG0044">
    <property type="taxonomic scope" value="Bacteria"/>
</dbReference>
<dbReference type="HOGENOM" id="CLU_015572_1_0_9"/>
<dbReference type="OrthoDB" id="9765462at2"/>
<dbReference type="UniPathway" id="UPA00070">
    <property type="reaction ID" value="UER00117"/>
</dbReference>
<dbReference type="Proteomes" id="UP000001383">
    <property type="component" value="Chromosome"/>
</dbReference>
<dbReference type="GO" id="GO:0005737">
    <property type="term" value="C:cytoplasm"/>
    <property type="evidence" value="ECO:0007669"/>
    <property type="project" value="TreeGrafter"/>
</dbReference>
<dbReference type="GO" id="GO:0004038">
    <property type="term" value="F:allantoinase activity"/>
    <property type="evidence" value="ECO:0007669"/>
    <property type="project" value="TreeGrafter"/>
</dbReference>
<dbReference type="GO" id="GO:0004151">
    <property type="term" value="F:dihydroorotase activity"/>
    <property type="evidence" value="ECO:0007669"/>
    <property type="project" value="UniProtKB-UniRule"/>
</dbReference>
<dbReference type="GO" id="GO:0008270">
    <property type="term" value="F:zinc ion binding"/>
    <property type="evidence" value="ECO:0007669"/>
    <property type="project" value="UniProtKB-UniRule"/>
</dbReference>
<dbReference type="GO" id="GO:0044205">
    <property type="term" value="P:'de novo' UMP biosynthetic process"/>
    <property type="evidence" value="ECO:0007669"/>
    <property type="project" value="UniProtKB-UniRule"/>
</dbReference>
<dbReference type="GO" id="GO:0006145">
    <property type="term" value="P:purine nucleobase catabolic process"/>
    <property type="evidence" value="ECO:0007669"/>
    <property type="project" value="TreeGrafter"/>
</dbReference>
<dbReference type="CDD" id="cd01317">
    <property type="entry name" value="DHOase_IIa"/>
    <property type="match status" value="1"/>
</dbReference>
<dbReference type="Gene3D" id="3.20.20.140">
    <property type="entry name" value="Metal-dependent hydrolases"/>
    <property type="match status" value="1"/>
</dbReference>
<dbReference type="Gene3D" id="2.30.40.10">
    <property type="entry name" value="Urease, subunit C, domain 1"/>
    <property type="match status" value="1"/>
</dbReference>
<dbReference type="HAMAP" id="MF_00220_B">
    <property type="entry name" value="PyrC_classI_B"/>
    <property type="match status" value="1"/>
</dbReference>
<dbReference type="InterPro" id="IPR006680">
    <property type="entry name" value="Amidohydro-rel"/>
</dbReference>
<dbReference type="InterPro" id="IPR004722">
    <property type="entry name" value="DHOase"/>
</dbReference>
<dbReference type="InterPro" id="IPR050138">
    <property type="entry name" value="DHOase/Allantoinase_Hydrolase"/>
</dbReference>
<dbReference type="InterPro" id="IPR002195">
    <property type="entry name" value="Dihydroorotase_CS"/>
</dbReference>
<dbReference type="InterPro" id="IPR011059">
    <property type="entry name" value="Metal-dep_hydrolase_composite"/>
</dbReference>
<dbReference type="InterPro" id="IPR032466">
    <property type="entry name" value="Metal_Hydrolase"/>
</dbReference>
<dbReference type="NCBIfam" id="NF006837">
    <property type="entry name" value="PRK09357.1-2"/>
    <property type="match status" value="1"/>
</dbReference>
<dbReference type="NCBIfam" id="TIGR00857">
    <property type="entry name" value="pyrC_multi"/>
    <property type="match status" value="1"/>
</dbReference>
<dbReference type="PANTHER" id="PTHR43668">
    <property type="entry name" value="ALLANTOINASE"/>
    <property type="match status" value="1"/>
</dbReference>
<dbReference type="PANTHER" id="PTHR43668:SF2">
    <property type="entry name" value="ALLANTOINASE"/>
    <property type="match status" value="1"/>
</dbReference>
<dbReference type="Pfam" id="PF01979">
    <property type="entry name" value="Amidohydro_1"/>
    <property type="match status" value="1"/>
</dbReference>
<dbReference type="SUPFAM" id="SSF51338">
    <property type="entry name" value="Composite domain of metallo-dependent hydrolases"/>
    <property type="match status" value="1"/>
</dbReference>
<dbReference type="SUPFAM" id="SSF51556">
    <property type="entry name" value="Metallo-dependent hydrolases"/>
    <property type="match status" value="1"/>
</dbReference>
<dbReference type="PROSITE" id="PS00482">
    <property type="entry name" value="DIHYDROOROTASE_1"/>
    <property type="match status" value="1"/>
</dbReference>
<dbReference type="PROSITE" id="PS00483">
    <property type="entry name" value="DIHYDROOROTASE_2"/>
    <property type="match status" value="1"/>
</dbReference>
<feature type="chain" id="PRO_1000193101" description="Dihydroorotase">
    <location>
        <begin position="1"/>
        <end position="427"/>
    </location>
</feature>
<feature type="active site" evidence="1">
    <location>
        <position position="303"/>
    </location>
</feature>
<feature type="binding site" evidence="1">
    <location>
        <position position="58"/>
    </location>
    <ligand>
        <name>Zn(2+)</name>
        <dbReference type="ChEBI" id="CHEBI:29105"/>
        <label>1</label>
    </ligand>
</feature>
<feature type="binding site" evidence="1">
    <location>
        <begin position="60"/>
        <end position="62"/>
    </location>
    <ligand>
        <name>substrate</name>
    </ligand>
</feature>
<feature type="binding site" evidence="1">
    <location>
        <position position="60"/>
    </location>
    <ligand>
        <name>Zn(2+)</name>
        <dbReference type="ChEBI" id="CHEBI:29105"/>
        <label>1</label>
    </ligand>
</feature>
<feature type="binding site" evidence="1">
    <location>
        <position position="92"/>
    </location>
    <ligand>
        <name>substrate</name>
    </ligand>
</feature>
<feature type="binding site" evidence="1">
    <location>
        <position position="150"/>
    </location>
    <ligand>
        <name>Zn(2+)</name>
        <dbReference type="ChEBI" id="CHEBI:29105"/>
        <label>1</label>
    </ligand>
</feature>
<feature type="binding site" evidence="1">
    <location>
        <position position="150"/>
    </location>
    <ligand>
        <name>Zn(2+)</name>
        <dbReference type="ChEBI" id="CHEBI:29105"/>
        <label>2</label>
    </ligand>
</feature>
<feature type="binding site" evidence="1">
    <location>
        <position position="177"/>
    </location>
    <ligand>
        <name>Zn(2+)</name>
        <dbReference type="ChEBI" id="CHEBI:29105"/>
        <label>2</label>
    </ligand>
</feature>
<feature type="binding site" evidence="1">
    <location>
        <position position="230"/>
    </location>
    <ligand>
        <name>Zn(2+)</name>
        <dbReference type="ChEBI" id="CHEBI:29105"/>
        <label>2</label>
    </ligand>
</feature>
<feature type="binding site" evidence="1">
    <location>
        <position position="276"/>
    </location>
    <ligand>
        <name>substrate</name>
    </ligand>
</feature>
<feature type="binding site" evidence="1">
    <location>
        <position position="303"/>
    </location>
    <ligand>
        <name>Zn(2+)</name>
        <dbReference type="ChEBI" id="CHEBI:29105"/>
        <label>1</label>
    </ligand>
</feature>
<feature type="binding site" evidence="1">
    <location>
        <position position="307"/>
    </location>
    <ligand>
        <name>substrate</name>
    </ligand>
</feature>
<feature type="binding site" evidence="1">
    <location>
        <begin position="321"/>
        <end position="322"/>
    </location>
    <ligand>
        <name>substrate</name>
    </ligand>
</feature>
<organism>
    <name type="scientific">Macrococcus caseolyticus (strain JCSC5402)</name>
    <name type="common">Macrococcoides caseolyticum</name>
    <dbReference type="NCBI Taxonomy" id="458233"/>
    <lineage>
        <taxon>Bacteria</taxon>
        <taxon>Bacillati</taxon>
        <taxon>Bacillota</taxon>
        <taxon>Bacilli</taxon>
        <taxon>Bacillales</taxon>
        <taxon>Staphylococcaceae</taxon>
        <taxon>Macrococcoides</taxon>
    </lineage>
</organism>
<keyword id="KW-0378">Hydrolase</keyword>
<keyword id="KW-0479">Metal-binding</keyword>
<keyword id="KW-0665">Pyrimidine biosynthesis</keyword>
<keyword id="KW-1185">Reference proteome</keyword>
<keyword id="KW-0862">Zinc</keyword>
<comment type="function">
    <text evidence="1">Catalyzes the reversible cyclization of carbamoyl aspartate to dihydroorotate.</text>
</comment>
<comment type="catalytic activity">
    <reaction evidence="1">
        <text>(S)-dihydroorotate + H2O = N-carbamoyl-L-aspartate + H(+)</text>
        <dbReference type="Rhea" id="RHEA:24296"/>
        <dbReference type="ChEBI" id="CHEBI:15377"/>
        <dbReference type="ChEBI" id="CHEBI:15378"/>
        <dbReference type="ChEBI" id="CHEBI:30864"/>
        <dbReference type="ChEBI" id="CHEBI:32814"/>
        <dbReference type="EC" id="3.5.2.3"/>
    </reaction>
</comment>
<comment type="cofactor">
    <cofactor evidence="1">
        <name>Zn(2+)</name>
        <dbReference type="ChEBI" id="CHEBI:29105"/>
    </cofactor>
    <text evidence="1">Binds 2 Zn(2+) ions per subunit.</text>
</comment>
<comment type="pathway">
    <text evidence="1">Pyrimidine metabolism; UMP biosynthesis via de novo pathway; (S)-dihydroorotate from bicarbonate: step 3/3.</text>
</comment>
<comment type="similarity">
    <text evidence="1">Belongs to the metallo-dependent hydrolases superfamily. DHOase family. Class I DHOase subfamily.</text>
</comment>
<evidence type="ECO:0000255" key="1">
    <source>
        <dbReference type="HAMAP-Rule" id="MF_00220"/>
    </source>
</evidence>
<name>PYRC_MACCJ</name>
<gene>
    <name evidence="1" type="primary">pyrC</name>
    <name type="ordered locus">MCCL_0771</name>
</gene>